<feature type="chain" id="PRO_0000147191" description="tRNA(Met) cytidine acetate ligase">
    <location>
        <begin position="1"/>
        <end position="368"/>
    </location>
</feature>
<feature type="binding site" evidence="1">
    <location>
        <begin position="7"/>
        <end position="20"/>
    </location>
    <ligand>
        <name>ATP</name>
        <dbReference type="ChEBI" id="CHEBI:30616"/>
    </ligand>
</feature>
<feature type="binding site" evidence="1">
    <location>
        <position position="96"/>
    </location>
    <ligand>
        <name>ATP</name>
        <dbReference type="ChEBI" id="CHEBI:30616"/>
    </ligand>
</feature>
<feature type="binding site" evidence="1">
    <location>
        <position position="152"/>
    </location>
    <ligand>
        <name>ATP</name>
        <dbReference type="ChEBI" id="CHEBI:30616"/>
    </ligand>
</feature>
<feature type="binding site" evidence="1">
    <location>
        <position position="175"/>
    </location>
    <ligand>
        <name>ATP</name>
        <dbReference type="ChEBI" id="CHEBI:30616"/>
    </ligand>
</feature>
<gene>
    <name evidence="1" type="primary">tmcAL</name>
    <name type="ordered locus">SPy_0314</name>
    <name type="ordered locus">M5005_Spy0267</name>
</gene>
<accession>Q9A1E8</accession>
<accession>Q490T2</accession>
<evidence type="ECO:0000255" key="1">
    <source>
        <dbReference type="HAMAP-Rule" id="MF_01539"/>
    </source>
</evidence>
<reference key="1">
    <citation type="journal article" date="2001" name="Proc. Natl. Acad. Sci. U.S.A.">
        <title>Complete genome sequence of an M1 strain of Streptococcus pyogenes.</title>
        <authorList>
            <person name="Ferretti J.J."/>
            <person name="McShan W.M."/>
            <person name="Ajdic D.J."/>
            <person name="Savic D.J."/>
            <person name="Savic G."/>
            <person name="Lyon K."/>
            <person name="Primeaux C."/>
            <person name="Sezate S."/>
            <person name="Suvorov A.N."/>
            <person name="Kenton S."/>
            <person name="Lai H.S."/>
            <person name="Lin S.P."/>
            <person name="Qian Y."/>
            <person name="Jia H.G."/>
            <person name="Najar F.Z."/>
            <person name="Ren Q."/>
            <person name="Zhu H."/>
            <person name="Song L."/>
            <person name="White J."/>
            <person name="Yuan X."/>
            <person name="Clifton S.W."/>
            <person name="Roe B.A."/>
            <person name="McLaughlin R.E."/>
        </authorList>
    </citation>
    <scope>NUCLEOTIDE SEQUENCE [LARGE SCALE GENOMIC DNA]</scope>
    <source>
        <strain>ATCC 700294 / SF370 / Serotype M1</strain>
    </source>
</reference>
<reference key="2">
    <citation type="journal article" date="2005" name="J. Infect. Dis.">
        <title>Evolutionary origin and emergence of a highly successful clone of serotype M1 group A Streptococcus involved multiple horizontal gene transfer events.</title>
        <authorList>
            <person name="Sumby P."/>
            <person name="Porcella S.F."/>
            <person name="Madrigal A.G."/>
            <person name="Barbian K.D."/>
            <person name="Virtaneva K."/>
            <person name="Ricklefs S.M."/>
            <person name="Sturdevant D.E."/>
            <person name="Graham M.R."/>
            <person name="Vuopio-Varkila J."/>
            <person name="Hoe N.P."/>
            <person name="Musser J.M."/>
        </authorList>
    </citation>
    <scope>NUCLEOTIDE SEQUENCE [LARGE SCALE GENOMIC DNA]</scope>
    <source>
        <strain>ATCC BAA-947 / MGAS5005 / Serotype M1</strain>
    </source>
</reference>
<name>TMCAL_STRP1</name>
<proteinExistence type="inferred from homology"/>
<comment type="function">
    <text evidence="1">Catalyzes the formation of N(4)-acetylcytidine (ac(4)C) at the wobble position of elongator tRNA(Met), using acetate and ATP as substrates. First activates an acetate ion to form acetyladenylate (Ac-AMP) and then transfers the acetyl group to tRNA to form ac(4)C34.</text>
</comment>
<comment type="catalytic activity">
    <reaction evidence="1">
        <text>cytidine(34) in elongator tRNA(Met) + acetate + ATP = N(4)-acetylcytidine(34) in elongator tRNA(Met) + AMP + diphosphate</text>
        <dbReference type="Rhea" id="RHEA:58144"/>
        <dbReference type="Rhea" id="RHEA-COMP:10693"/>
        <dbReference type="Rhea" id="RHEA-COMP:10694"/>
        <dbReference type="ChEBI" id="CHEBI:30089"/>
        <dbReference type="ChEBI" id="CHEBI:30616"/>
        <dbReference type="ChEBI" id="CHEBI:33019"/>
        <dbReference type="ChEBI" id="CHEBI:74900"/>
        <dbReference type="ChEBI" id="CHEBI:82748"/>
        <dbReference type="ChEBI" id="CHEBI:456215"/>
    </reaction>
</comment>
<comment type="subcellular location">
    <subcellularLocation>
        <location evidence="1">Cytoplasm</location>
    </subcellularLocation>
</comment>
<comment type="similarity">
    <text evidence="1">Belongs to the TmcAL family.</text>
</comment>
<dbReference type="EC" id="6.3.4.-" evidence="1"/>
<dbReference type="EMBL" id="AE004092">
    <property type="protein sequence ID" value="AAK33374.1"/>
    <property type="molecule type" value="Genomic_DNA"/>
</dbReference>
<dbReference type="EMBL" id="CP000017">
    <property type="protein sequence ID" value="AAZ50886.1"/>
    <property type="molecule type" value="Genomic_DNA"/>
</dbReference>
<dbReference type="RefSeq" id="NP_268653.1">
    <property type="nucleotide sequence ID" value="NC_002737.2"/>
</dbReference>
<dbReference type="SMR" id="Q9A1E8"/>
<dbReference type="PaxDb" id="1314-HKU360_00307"/>
<dbReference type="KEGG" id="spy:SPy_0314"/>
<dbReference type="KEGG" id="spz:M5005_Spy0267"/>
<dbReference type="PATRIC" id="fig|160490.10.peg.274"/>
<dbReference type="HOGENOM" id="CLU_038915_0_2_9"/>
<dbReference type="OMA" id="IYQMSEG"/>
<dbReference type="Proteomes" id="UP000000750">
    <property type="component" value="Chromosome"/>
</dbReference>
<dbReference type="GO" id="GO:0005737">
    <property type="term" value="C:cytoplasm"/>
    <property type="evidence" value="ECO:0007669"/>
    <property type="project" value="UniProtKB-SubCell"/>
</dbReference>
<dbReference type="GO" id="GO:0005524">
    <property type="term" value="F:ATP binding"/>
    <property type="evidence" value="ECO:0007669"/>
    <property type="project" value="UniProtKB-KW"/>
</dbReference>
<dbReference type="GO" id="GO:0016879">
    <property type="term" value="F:ligase activity, forming carbon-nitrogen bonds"/>
    <property type="evidence" value="ECO:0007669"/>
    <property type="project" value="UniProtKB-UniRule"/>
</dbReference>
<dbReference type="GO" id="GO:0000049">
    <property type="term" value="F:tRNA binding"/>
    <property type="evidence" value="ECO:0007669"/>
    <property type="project" value="UniProtKB-KW"/>
</dbReference>
<dbReference type="GO" id="GO:0006400">
    <property type="term" value="P:tRNA modification"/>
    <property type="evidence" value="ECO:0007669"/>
    <property type="project" value="UniProtKB-UniRule"/>
</dbReference>
<dbReference type="Gene3D" id="3.40.50.620">
    <property type="entry name" value="HUPs"/>
    <property type="match status" value="1"/>
</dbReference>
<dbReference type="HAMAP" id="MF_01539">
    <property type="entry name" value="TmcAL"/>
    <property type="match status" value="1"/>
</dbReference>
<dbReference type="InterPro" id="IPR014729">
    <property type="entry name" value="Rossmann-like_a/b/a_fold"/>
</dbReference>
<dbReference type="InterPro" id="IPR008513">
    <property type="entry name" value="tRNA(Met)_cyd_acetate_ligase"/>
</dbReference>
<dbReference type="NCBIfam" id="NF010191">
    <property type="entry name" value="PRK13670.1"/>
    <property type="match status" value="1"/>
</dbReference>
<dbReference type="PANTHER" id="PTHR37825">
    <property type="entry name" value="TRNA(MET) CYTIDINE ACETATE LIGASE"/>
    <property type="match status" value="1"/>
</dbReference>
<dbReference type="PANTHER" id="PTHR37825:SF1">
    <property type="entry name" value="TRNA(MET) CYTIDINE ACETATE LIGASE"/>
    <property type="match status" value="1"/>
</dbReference>
<dbReference type="Pfam" id="PF05636">
    <property type="entry name" value="HIGH_NTase1"/>
    <property type="match status" value="1"/>
</dbReference>
<dbReference type="SUPFAM" id="SSF52374">
    <property type="entry name" value="Nucleotidylyl transferase"/>
    <property type="match status" value="1"/>
</dbReference>
<keyword id="KW-0067">ATP-binding</keyword>
<keyword id="KW-0963">Cytoplasm</keyword>
<keyword id="KW-0436">Ligase</keyword>
<keyword id="KW-0547">Nucleotide-binding</keyword>
<keyword id="KW-1185">Reference proteome</keyword>
<keyword id="KW-0694">RNA-binding</keyword>
<keyword id="KW-0819">tRNA processing</keyword>
<keyword id="KW-0820">tRNA-binding</keyword>
<protein>
    <recommendedName>
        <fullName evidence="1">tRNA(Met) cytidine acetate ligase</fullName>
        <ecNumber evidence="1">6.3.4.-</ecNumber>
    </recommendedName>
</protein>
<sequence length="368" mass="41680">MTVTGIIAEFNPFHNGHKYLLETAEGLKIIAMSGNFMQRGEPALIDKWIRSEMALKNGADIVVELPFFVSVQSADYFAQGAIDILCQLGIQQLAFGTENVIDYQKLIKVYEKKSEQMTAYLSTLEDTFSYPQKTQKMWEIFAGVKFSGQTPNHILGLSYAKASAGKHIQLCPIKRQGAAYHSKDKNHLLASASAIRQHLNDWDFISHSVPNAGLLINNPHMSWDHYFSFLKYQILNHSDLTSIFQVNDELASRIKKAIKVSQNIDHLVDTVATKRYTKARVRRILTYILVNAKEPTLPKGIHILGFTSKGQAHLKKLKKSRPLITRIGAETWDEMTQKADSIYQLGHQDIPEQSFGRIPIIIKNERLN</sequence>
<organism>
    <name type="scientific">Streptococcus pyogenes serotype M1</name>
    <dbReference type="NCBI Taxonomy" id="301447"/>
    <lineage>
        <taxon>Bacteria</taxon>
        <taxon>Bacillati</taxon>
        <taxon>Bacillota</taxon>
        <taxon>Bacilli</taxon>
        <taxon>Lactobacillales</taxon>
        <taxon>Streptococcaceae</taxon>
        <taxon>Streptococcus</taxon>
    </lineage>
</organism>